<feature type="chain" id="PRO_1000067222" description="L-fucose isomerase">
    <location>
        <begin position="1"/>
        <end position="591"/>
    </location>
</feature>
<feature type="active site" description="Proton acceptor" evidence="1">
    <location>
        <position position="337"/>
    </location>
</feature>
<feature type="active site" description="Proton acceptor" evidence="1">
    <location>
        <position position="361"/>
    </location>
</feature>
<feature type="binding site" evidence="1">
    <location>
        <position position="337"/>
    </location>
    <ligand>
        <name>Mn(2+)</name>
        <dbReference type="ChEBI" id="CHEBI:29035"/>
    </ligand>
</feature>
<feature type="binding site" evidence="1">
    <location>
        <position position="361"/>
    </location>
    <ligand>
        <name>Mn(2+)</name>
        <dbReference type="ChEBI" id="CHEBI:29035"/>
    </ligand>
</feature>
<feature type="binding site" evidence="1">
    <location>
        <position position="528"/>
    </location>
    <ligand>
        <name>Mn(2+)</name>
        <dbReference type="ChEBI" id="CHEBI:29035"/>
    </ligand>
</feature>
<dbReference type="EC" id="5.3.1.25" evidence="1"/>
<dbReference type="EMBL" id="CP000647">
    <property type="protein sequence ID" value="ABR78554.1"/>
    <property type="molecule type" value="Genomic_DNA"/>
</dbReference>
<dbReference type="RefSeq" id="WP_002915510.1">
    <property type="nucleotide sequence ID" value="NC_009648.1"/>
</dbReference>
<dbReference type="SMR" id="A6TD83"/>
<dbReference type="STRING" id="272620.KPN_03153"/>
<dbReference type="PaxDb" id="272620-KPN_03153"/>
<dbReference type="EnsemblBacteria" id="ABR78554">
    <property type="protein sequence ID" value="ABR78554"/>
    <property type="gene ID" value="KPN_03153"/>
</dbReference>
<dbReference type="KEGG" id="kpn:KPN_03153"/>
<dbReference type="HOGENOM" id="CLU_033326_1_0_6"/>
<dbReference type="UniPathway" id="UPA00563">
    <property type="reaction ID" value="UER00624"/>
</dbReference>
<dbReference type="Proteomes" id="UP000000265">
    <property type="component" value="Chromosome"/>
</dbReference>
<dbReference type="GO" id="GO:0005737">
    <property type="term" value="C:cytoplasm"/>
    <property type="evidence" value="ECO:0007669"/>
    <property type="project" value="UniProtKB-SubCell"/>
</dbReference>
<dbReference type="GO" id="GO:0008790">
    <property type="term" value="F:arabinose isomerase activity"/>
    <property type="evidence" value="ECO:0007669"/>
    <property type="project" value="TreeGrafter"/>
</dbReference>
<dbReference type="GO" id="GO:0008736">
    <property type="term" value="F:L-fucose isomerase activity"/>
    <property type="evidence" value="ECO:0007669"/>
    <property type="project" value="UniProtKB-UniRule"/>
</dbReference>
<dbReference type="GO" id="GO:0030145">
    <property type="term" value="F:manganese ion binding"/>
    <property type="evidence" value="ECO:0007669"/>
    <property type="project" value="UniProtKB-UniRule"/>
</dbReference>
<dbReference type="GO" id="GO:0019571">
    <property type="term" value="P:D-arabinose catabolic process"/>
    <property type="evidence" value="ECO:0007669"/>
    <property type="project" value="TreeGrafter"/>
</dbReference>
<dbReference type="GO" id="GO:0042355">
    <property type="term" value="P:L-fucose catabolic process"/>
    <property type="evidence" value="ECO:0007669"/>
    <property type="project" value="UniProtKB-UniRule"/>
</dbReference>
<dbReference type="FunFam" id="3.20.14.10:FF:000001">
    <property type="entry name" value="L-fucose isomerase"/>
    <property type="match status" value="1"/>
</dbReference>
<dbReference type="FunFam" id="3.40.275.10:FF:000001">
    <property type="entry name" value="L-fucose isomerase"/>
    <property type="match status" value="1"/>
</dbReference>
<dbReference type="FunFam" id="3.40.50.1070:FF:000001">
    <property type="entry name" value="L-fucose isomerase"/>
    <property type="match status" value="1"/>
</dbReference>
<dbReference type="Gene3D" id="3.40.50.1070">
    <property type="match status" value="1"/>
</dbReference>
<dbReference type="Gene3D" id="3.40.275.10">
    <property type="entry name" value="L-fucose Isomerase, Chain A, domain 2"/>
    <property type="match status" value="1"/>
</dbReference>
<dbReference type="Gene3D" id="3.20.14.10">
    <property type="entry name" value="L-fucose/L-arabinose isomerase, C-terminal"/>
    <property type="match status" value="1"/>
</dbReference>
<dbReference type="HAMAP" id="MF_01254">
    <property type="entry name" value="Fucose_iso"/>
    <property type="match status" value="1"/>
</dbReference>
<dbReference type="InterPro" id="IPR004216">
    <property type="entry name" value="Fuc/Ara_isomerase_C"/>
</dbReference>
<dbReference type="InterPro" id="IPR038393">
    <property type="entry name" value="Fuc_iso_dom3_sf"/>
</dbReference>
<dbReference type="InterPro" id="IPR015888">
    <property type="entry name" value="Fuc_isomerase_C"/>
</dbReference>
<dbReference type="InterPro" id="IPR038391">
    <property type="entry name" value="Fucose_iso_dom1_sf"/>
</dbReference>
<dbReference type="InterPro" id="IPR012888">
    <property type="entry name" value="Fucose_iso_N1"/>
</dbReference>
<dbReference type="InterPro" id="IPR005763">
    <property type="entry name" value="Fucose_isomerase"/>
</dbReference>
<dbReference type="InterPro" id="IPR038392">
    <property type="entry name" value="Fucose_isomerase_dom2_sf"/>
</dbReference>
<dbReference type="InterPro" id="IPR009015">
    <property type="entry name" value="Fucose_isomerase_N/cen_sf"/>
</dbReference>
<dbReference type="InterPro" id="IPR012889">
    <property type="entry name" value="Fucose_isomerase_N2"/>
</dbReference>
<dbReference type="NCBIfam" id="TIGR01089">
    <property type="entry name" value="fucI"/>
    <property type="match status" value="1"/>
</dbReference>
<dbReference type="NCBIfam" id="NF008220">
    <property type="entry name" value="PRK10991.1"/>
    <property type="match status" value="1"/>
</dbReference>
<dbReference type="PANTHER" id="PTHR37840">
    <property type="entry name" value="L-FUCOSE ISOMERASE"/>
    <property type="match status" value="1"/>
</dbReference>
<dbReference type="PANTHER" id="PTHR37840:SF1">
    <property type="entry name" value="L-FUCOSE ISOMERASE"/>
    <property type="match status" value="1"/>
</dbReference>
<dbReference type="Pfam" id="PF02952">
    <property type="entry name" value="Fucose_iso_C"/>
    <property type="match status" value="1"/>
</dbReference>
<dbReference type="Pfam" id="PF07881">
    <property type="entry name" value="Fucose_iso_N1"/>
    <property type="match status" value="1"/>
</dbReference>
<dbReference type="Pfam" id="PF07882">
    <property type="entry name" value="Fucose_iso_N2"/>
    <property type="match status" value="1"/>
</dbReference>
<dbReference type="SUPFAM" id="SSF50443">
    <property type="entry name" value="FucI/AraA C-terminal domain-like"/>
    <property type="match status" value="1"/>
</dbReference>
<dbReference type="SUPFAM" id="SSF53743">
    <property type="entry name" value="FucI/AraA N-terminal and middle domains"/>
    <property type="match status" value="1"/>
</dbReference>
<sequence length="591" mass="64768">MKKISLPKIGIRPVIDGRRMGVRESLEAQTMNMAKATAALISEKLRHACGARVECVIADTCIAGMAESAACEEKFSSQNVGVTITVTPCWCYGSETIDMDPLRPKAIWGFNGTERPGAVYLAAALAAHSQKGIPAFSIYGHDVQDADDTSIPADVEEKLLRFARAGLAVASMKGKSYLSLGGVSMGIAGSIVDHNFFESWLGMKVQAVDMTELRRRIDQKIYDETELEMALAWADKHFRYGEDQNAEQYKRNETQSRAVLKESLLMAMCIRDMMQGNPKLAEKGLVEESLGYNAIAAGFQGQRHWTDQYPNGDTAEALLNSSFDWNGVREPFVVATENDSLNGVAMLMGHQLTGTAQVFADVRTYWSPDAVERVTGQPLTGRAEHGIIHLINSGSAALDGSCQQRDAQGNPTMKPHWEIEQSEADACLAATEWCPAIHEYFRGGGFSSRFLTEGGVPFTMTRVNIIKGLGPVLQIAEGWSVALPKAMHDQLDARTNSTWPTTWFAPRLTGKGPFSDVYSVMANWGANHGVLTIGHVGADFITLAAMLRIPVCMHNVEEAKIYRPSAWAAHGMDIEGQDYRACQNYGPLYKR</sequence>
<accession>A6TD83</accession>
<comment type="function">
    <text evidence="1">Converts the aldose L-fucose into the corresponding ketose L-fuculose.</text>
</comment>
<comment type="catalytic activity">
    <reaction evidence="1">
        <text>L-fucose = L-fuculose</text>
        <dbReference type="Rhea" id="RHEA:17233"/>
        <dbReference type="ChEBI" id="CHEBI:2181"/>
        <dbReference type="ChEBI" id="CHEBI:17617"/>
        <dbReference type="EC" id="5.3.1.25"/>
    </reaction>
</comment>
<comment type="cofactor">
    <cofactor evidence="1">
        <name>Mn(2+)</name>
        <dbReference type="ChEBI" id="CHEBI:29035"/>
    </cofactor>
</comment>
<comment type="pathway">
    <text evidence="1">Carbohydrate degradation; L-fucose degradation; L-lactaldehyde and glycerone phosphate from L-fucose: step 1/3.</text>
</comment>
<comment type="subunit">
    <text evidence="1">Homohexamer.</text>
</comment>
<comment type="subcellular location">
    <subcellularLocation>
        <location evidence="1">Cytoplasm</location>
    </subcellularLocation>
</comment>
<comment type="similarity">
    <text evidence="1">Belongs to the L-fucose isomerase family.</text>
</comment>
<keyword id="KW-0119">Carbohydrate metabolism</keyword>
<keyword id="KW-0963">Cytoplasm</keyword>
<keyword id="KW-0294">Fucose metabolism</keyword>
<keyword id="KW-0413">Isomerase</keyword>
<keyword id="KW-0464">Manganese</keyword>
<keyword id="KW-0479">Metal-binding</keyword>
<protein>
    <recommendedName>
        <fullName evidence="1">L-fucose isomerase</fullName>
        <ecNumber evidence="1">5.3.1.25</ecNumber>
    </recommendedName>
    <alternativeName>
        <fullName evidence="1">6-deoxy-L-galactose isomerase</fullName>
    </alternativeName>
    <alternativeName>
        <fullName>FucIase</fullName>
    </alternativeName>
</protein>
<evidence type="ECO:0000255" key="1">
    <source>
        <dbReference type="HAMAP-Rule" id="MF_01254"/>
    </source>
</evidence>
<reference key="1">
    <citation type="submission" date="2006-09" db="EMBL/GenBank/DDBJ databases">
        <authorList>
            <consortium name="The Klebsiella pneumonia Genome Sequencing Project"/>
            <person name="McClelland M."/>
            <person name="Sanderson E.K."/>
            <person name="Spieth J."/>
            <person name="Clifton W.S."/>
            <person name="Latreille P."/>
            <person name="Sabo A."/>
            <person name="Pepin K."/>
            <person name="Bhonagiri V."/>
            <person name="Porwollik S."/>
            <person name="Ali J."/>
            <person name="Wilson R.K."/>
        </authorList>
    </citation>
    <scope>NUCLEOTIDE SEQUENCE [LARGE SCALE GENOMIC DNA]</scope>
    <source>
        <strain>ATCC 700721 / MGH 78578</strain>
    </source>
</reference>
<name>FUCI_KLEP7</name>
<organism>
    <name type="scientific">Klebsiella pneumoniae subsp. pneumoniae (strain ATCC 700721 / MGH 78578)</name>
    <dbReference type="NCBI Taxonomy" id="272620"/>
    <lineage>
        <taxon>Bacteria</taxon>
        <taxon>Pseudomonadati</taxon>
        <taxon>Pseudomonadota</taxon>
        <taxon>Gammaproteobacteria</taxon>
        <taxon>Enterobacterales</taxon>
        <taxon>Enterobacteriaceae</taxon>
        <taxon>Klebsiella/Raoultella group</taxon>
        <taxon>Klebsiella</taxon>
        <taxon>Klebsiella pneumoniae complex</taxon>
    </lineage>
</organism>
<proteinExistence type="inferred from homology"/>
<gene>
    <name evidence="1" type="primary">fucI</name>
    <name type="ordered locus">KPN78578_30930</name>
    <name type="ORF">KPN_03153</name>
</gene>